<accession>Q02T65</accession>
<feature type="chain" id="PRO_1000055286" description="Large ribosomal subunit protein uL6">
    <location>
        <begin position="1"/>
        <end position="177"/>
    </location>
</feature>
<gene>
    <name evidence="1" type="primary">rplF</name>
    <name type="ordered locus">PA14_09000</name>
</gene>
<evidence type="ECO:0000255" key="1">
    <source>
        <dbReference type="HAMAP-Rule" id="MF_01365"/>
    </source>
</evidence>
<evidence type="ECO:0000305" key="2"/>
<reference key="1">
    <citation type="journal article" date="2006" name="Genome Biol.">
        <title>Genomic analysis reveals that Pseudomonas aeruginosa virulence is combinatorial.</title>
        <authorList>
            <person name="Lee D.G."/>
            <person name="Urbach J.M."/>
            <person name="Wu G."/>
            <person name="Liberati N.T."/>
            <person name="Feinbaum R.L."/>
            <person name="Miyata S."/>
            <person name="Diggins L.T."/>
            <person name="He J."/>
            <person name="Saucier M."/>
            <person name="Deziel E."/>
            <person name="Friedman L."/>
            <person name="Li L."/>
            <person name="Grills G."/>
            <person name="Montgomery K."/>
            <person name="Kucherlapati R."/>
            <person name="Rahme L.G."/>
            <person name="Ausubel F.M."/>
        </authorList>
    </citation>
    <scope>NUCLEOTIDE SEQUENCE [LARGE SCALE GENOMIC DNA]</scope>
    <source>
        <strain>UCBPP-PA14</strain>
    </source>
</reference>
<protein>
    <recommendedName>
        <fullName evidence="1">Large ribosomal subunit protein uL6</fullName>
    </recommendedName>
    <alternativeName>
        <fullName evidence="2">50S ribosomal protein L6</fullName>
    </alternativeName>
</protein>
<dbReference type="EMBL" id="CP000438">
    <property type="protein sequence ID" value="ABJ13519.1"/>
    <property type="molecule type" value="Genomic_DNA"/>
</dbReference>
<dbReference type="RefSeq" id="WP_003093699.1">
    <property type="nucleotide sequence ID" value="NZ_CP034244.1"/>
</dbReference>
<dbReference type="SMR" id="Q02T65"/>
<dbReference type="GeneID" id="77219213"/>
<dbReference type="KEGG" id="pau:PA14_09000"/>
<dbReference type="PseudoCAP" id="PA14_09000"/>
<dbReference type="HOGENOM" id="CLU_065464_1_2_6"/>
<dbReference type="BioCyc" id="PAER208963:G1G74-751-MONOMER"/>
<dbReference type="Proteomes" id="UP000000653">
    <property type="component" value="Chromosome"/>
</dbReference>
<dbReference type="GO" id="GO:0022625">
    <property type="term" value="C:cytosolic large ribosomal subunit"/>
    <property type="evidence" value="ECO:0007669"/>
    <property type="project" value="TreeGrafter"/>
</dbReference>
<dbReference type="GO" id="GO:0019843">
    <property type="term" value="F:rRNA binding"/>
    <property type="evidence" value="ECO:0007669"/>
    <property type="project" value="UniProtKB-UniRule"/>
</dbReference>
<dbReference type="GO" id="GO:0003735">
    <property type="term" value="F:structural constituent of ribosome"/>
    <property type="evidence" value="ECO:0007669"/>
    <property type="project" value="InterPro"/>
</dbReference>
<dbReference type="GO" id="GO:0002181">
    <property type="term" value="P:cytoplasmic translation"/>
    <property type="evidence" value="ECO:0007669"/>
    <property type="project" value="TreeGrafter"/>
</dbReference>
<dbReference type="FunFam" id="3.90.930.12:FF:000001">
    <property type="entry name" value="50S ribosomal protein L6"/>
    <property type="match status" value="1"/>
</dbReference>
<dbReference type="FunFam" id="3.90.930.12:FF:000002">
    <property type="entry name" value="50S ribosomal protein L6"/>
    <property type="match status" value="1"/>
</dbReference>
<dbReference type="Gene3D" id="3.90.930.12">
    <property type="entry name" value="Ribosomal protein L6, alpha-beta domain"/>
    <property type="match status" value="2"/>
</dbReference>
<dbReference type="HAMAP" id="MF_01365_B">
    <property type="entry name" value="Ribosomal_uL6_B"/>
    <property type="match status" value="1"/>
</dbReference>
<dbReference type="InterPro" id="IPR000702">
    <property type="entry name" value="Ribosomal_uL6-like"/>
</dbReference>
<dbReference type="InterPro" id="IPR036789">
    <property type="entry name" value="Ribosomal_uL6-like_a/b-dom_sf"/>
</dbReference>
<dbReference type="InterPro" id="IPR020040">
    <property type="entry name" value="Ribosomal_uL6_a/b-dom"/>
</dbReference>
<dbReference type="InterPro" id="IPR019906">
    <property type="entry name" value="Ribosomal_uL6_bac-type"/>
</dbReference>
<dbReference type="InterPro" id="IPR002358">
    <property type="entry name" value="Ribosomal_uL6_CS"/>
</dbReference>
<dbReference type="NCBIfam" id="TIGR03654">
    <property type="entry name" value="L6_bact"/>
    <property type="match status" value="1"/>
</dbReference>
<dbReference type="PANTHER" id="PTHR11655">
    <property type="entry name" value="60S/50S RIBOSOMAL PROTEIN L6/L9"/>
    <property type="match status" value="1"/>
</dbReference>
<dbReference type="PANTHER" id="PTHR11655:SF14">
    <property type="entry name" value="LARGE RIBOSOMAL SUBUNIT PROTEIN UL6M"/>
    <property type="match status" value="1"/>
</dbReference>
<dbReference type="Pfam" id="PF00347">
    <property type="entry name" value="Ribosomal_L6"/>
    <property type="match status" value="2"/>
</dbReference>
<dbReference type="PIRSF" id="PIRSF002162">
    <property type="entry name" value="Ribosomal_L6"/>
    <property type="match status" value="1"/>
</dbReference>
<dbReference type="PRINTS" id="PR00059">
    <property type="entry name" value="RIBOSOMALL6"/>
</dbReference>
<dbReference type="SUPFAM" id="SSF56053">
    <property type="entry name" value="Ribosomal protein L6"/>
    <property type="match status" value="2"/>
</dbReference>
<dbReference type="PROSITE" id="PS00525">
    <property type="entry name" value="RIBOSOMAL_L6_1"/>
    <property type="match status" value="1"/>
</dbReference>
<name>RL6_PSEAB</name>
<sequence length="177" mass="19099">MSRVAKNPVKLPAGVEIKLAGQQLSIKGAKGALELKVHPSVEVIQDSGELRFAARNGDQQTRAMAGTTRALVNNMVVGVSQGFERKLQLVGVGYKAQAKGQVLSLSLGFSHPVDYELPAGIVAETPSQTDILIKGIDKQLVGQVAAEIRDFRPPEPYKGKGVRYADEVVRRKEAKKK</sequence>
<keyword id="KW-0687">Ribonucleoprotein</keyword>
<keyword id="KW-0689">Ribosomal protein</keyword>
<keyword id="KW-0694">RNA-binding</keyword>
<keyword id="KW-0699">rRNA-binding</keyword>
<comment type="function">
    <text evidence="1">This protein binds to the 23S rRNA, and is important in its secondary structure. It is located near the subunit interface in the base of the L7/L12 stalk, and near the tRNA binding site of the peptidyltransferase center.</text>
</comment>
<comment type="subunit">
    <text evidence="1">Part of the 50S ribosomal subunit.</text>
</comment>
<comment type="similarity">
    <text evidence="1">Belongs to the universal ribosomal protein uL6 family.</text>
</comment>
<proteinExistence type="inferred from homology"/>
<organism>
    <name type="scientific">Pseudomonas aeruginosa (strain UCBPP-PA14)</name>
    <dbReference type="NCBI Taxonomy" id="208963"/>
    <lineage>
        <taxon>Bacteria</taxon>
        <taxon>Pseudomonadati</taxon>
        <taxon>Pseudomonadota</taxon>
        <taxon>Gammaproteobacteria</taxon>
        <taxon>Pseudomonadales</taxon>
        <taxon>Pseudomonadaceae</taxon>
        <taxon>Pseudomonas</taxon>
    </lineage>
</organism>